<feature type="chain" id="PRO_0000430370" description="Jacalin-related lectin 3">
    <location>
        <begin position="1"/>
        <end position="601"/>
    </location>
</feature>
<feature type="domain" description="Jacalin-type lectin 1" evidence="1">
    <location>
        <begin position="13"/>
        <end position="155"/>
    </location>
</feature>
<feature type="domain" description="Jacalin-type lectin 2" evidence="1">
    <location>
        <begin position="240"/>
        <end position="382"/>
    </location>
</feature>
<feature type="domain" description="Jacalin-type lectin 3" evidence="1">
    <location>
        <begin position="438"/>
        <end position="583"/>
    </location>
</feature>
<feature type="splice variant" id="VSP_056710" description="In isoform 3." evidence="3">
    <location>
        <begin position="1"/>
        <end position="30"/>
    </location>
</feature>
<feature type="splice variant" id="VSP_056711" description="In isoform 2." evidence="2">
    <original>MVLTSSY</original>
    <variation>M</variation>
    <location>
        <begin position="1"/>
        <end position="7"/>
    </location>
</feature>
<accession>F4HQX1</accession>
<accession>Q8W4L1</accession>
<accession>Q9FXH0</accession>
<reference key="1">
    <citation type="journal article" date="2000" name="Nature">
        <title>Sequence and analysis of chromosome 1 of the plant Arabidopsis thaliana.</title>
        <authorList>
            <person name="Theologis A."/>
            <person name="Ecker J.R."/>
            <person name="Palm C.J."/>
            <person name="Federspiel N.A."/>
            <person name="Kaul S."/>
            <person name="White O."/>
            <person name="Alonso J."/>
            <person name="Altafi H."/>
            <person name="Araujo R."/>
            <person name="Bowman C.L."/>
            <person name="Brooks S.Y."/>
            <person name="Buehler E."/>
            <person name="Chan A."/>
            <person name="Chao Q."/>
            <person name="Chen H."/>
            <person name="Cheuk R.F."/>
            <person name="Chin C.W."/>
            <person name="Chung M.K."/>
            <person name="Conn L."/>
            <person name="Conway A.B."/>
            <person name="Conway A.R."/>
            <person name="Creasy T.H."/>
            <person name="Dewar K."/>
            <person name="Dunn P."/>
            <person name="Etgu P."/>
            <person name="Feldblyum T.V."/>
            <person name="Feng J.-D."/>
            <person name="Fong B."/>
            <person name="Fujii C.Y."/>
            <person name="Gill J.E."/>
            <person name="Goldsmith A.D."/>
            <person name="Haas B."/>
            <person name="Hansen N.F."/>
            <person name="Hughes B."/>
            <person name="Huizar L."/>
            <person name="Hunter J.L."/>
            <person name="Jenkins J."/>
            <person name="Johnson-Hopson C."/>
            <person name="Khan S."/>
            <person name="Khaykin E."/>
            <person name="Kim C.J."/>
            <person name="Koo H.L."/>
            <person name="Kremenetskaia I."/>
            <person name="Kurtz D.B."/>
            <person name="Kwan A."/>
            <person name="Lam B."/>
            <person name="Langin-Hooper S."/>
            <person name="Lee A."/>
            <person name="Lee J.M."/>
            <person name="Lenz C.A."/>
            <person name="Li J.H."/>
            <person name="Li Y.-P."/>
            <person name="Lin X."/>
            <person name="Liu S.X."/>
            <person name="Liu Z.A."/>
            <person name="Luros J.S."/>
            <person name="Maiti R."/>
            <person name="Marziali A."/>
            <person name="Militscher J."/>
            <person name="Miranda M."/>
            <person name="Nguyen M."/>
            <person name="Nierman W.C."/>
            <person name="Osborne B.I."/>
            <person name="Pai G."/>
            <person name="Peterson J."/>
            <person name="Pham P.K."/>
            <person name="Rizzo M."/>
            <person name="Rooney T."/>
            <person name="Rowley D."/>
            <person name="Sakano H."/>
            <person name="Salzberg S.L."/>
            <person name="Schwartz J.R."/>
            <person name="Shinn P."/>
            <person name="Southwick A.M."/>
            <person name="Sun H."/>
            <person name="Tallon L.J."/>
            <person name="Tambunga G."/>
            <person name="Toriumi M.J."/>
            <person name="Town C.D."/>
            <person name="Utterback T."/>
            <person name="Van Aken S."/>
            <person name="Vaysberg M."/>
            <person name="Vysotskaia V.S."/>
            <person name="Walker M."/>
            <person name="Wu D."/>
            <person name="Yu G."/>
            <person name="Fraser C.M."/>
            <person name="Venter J.C."/>
            <person name="Davis R.W."/>
        </authorList>
    </citation>
    <scope>NUCLEOTIDE SEQUENCE [LARGE SCALE GENOMIC DNA]</scope>
    <source>
        <strain>cv. Columbia</strain>
    </source>
</reference>
<reference key="2">
    <citation type="journal article" date="2017" name="Plant J.">
        <title>Araport11: a complete reannotation of the Arabidopsis thaliana reference genome.</title>
        <authorList>
            <person name="Cheng C.Y."/>
            <person name="Krishnakumar V."/>
            <person name="Chan A.P."/>
            <person name="Thibaud-Nissen F."/>
            <person name="Schobel S."/>
            <person name="Town C.D."/>
        </authorList>
    </citation>
    <scope>GENOME REANNOTATION</scope>
    <source>
        <strain>cv. Columbia</strain>
    </source>
</reference>
<reference key="3">
    <citation type="journal article" date="2003" name="Science">
        <title>Empirical analysis of transcriptional activity in the Arabidopsis genome.</title>
        <authorList>
            <person name="Yamada K."/>
            <person name="Lim J."/>
            <person name="Dale J.M."/>
            <person name="Chen H."/>
            <person name="Shinn P."/>
            <person name="Palm C.J."/>
            <person name="Southwick A.M."/>
            <person name="Wu H.C."/>
            <person name="Kim C.J."/>
            <person name="Nguyen M."/>
            <person name="Pham P.K."/>
            <person name="Cheuk R.F."/>
            <person name="Karlin-Newmann G."/>
            <person name="Liu S.X."/>
            <person name="Lam B."/>
            <person name="Sakano H."/>
            <person name="Wu T."/>
            <person name="Yu G."/>
            <person name="Miranda M."/>
            <person name="Quach H.L."/>
            <person name="Tripp M."/>
            <person name="Chang C.H."/>
            <person name="Lee J.M."/>
            <person name="Toriumi M.J."/>
            <person name="Chan M.M."/>
            <person name="Tang C.C."/>
            <person name="Onodera C.S."/>
            <person name="Deng J.M."/>
            <person name="Akiyama K."/>
            <person name="Ansari Y."/>
            <person name="Arakawa T."/>
            <person name="Banh J."/>
            <person name="Banno F."/>
            <person name="Bowser L."/>
            <person name="Brooks S.Y."/>
            <person name="Carninci P."/>
            <person name="Chao Q."/>
            <person name="Choy N."/>
            <person name="Enju A."/>
            <person name="Goldsmith A.D."/>
            <person name="Gurjal M."/>
            <person name="Hansen N.F."/>
            <person name="Hayashizaki Y."/>
            <person name="Johnson-Hopson C."/>
            <person name="Hsuan V.W."/>
            <person name="Iida K."/>
            <person name="Karnes M."/>
            <person name="Khan S."/>
            <person name="Koesema E."/>
            <person name="Ishida J."/>
            <person name="Jiang P.X."/>
            <person name="Jones T."/>
            <person name="Kawai J."/>
            <person name="Kamiya A."/>
            <person name="Meyers C."/>
            <person name="Nakajima M."/>
            <person name="Narusaka M."/>
            <person name="Seki M."/>
            <person name="Sakurai T."/>
            <person name="Satou M."/>
            <person name="Tamse R."/>
            <person name="Vaysberg M."/>
            <person name="Wallender E.K."/>
            <person name="Wong C."/>
            <person name="Yamamura Y."/>
            <person name="Yuan S."/>
            <person name="Shinozaki K."/>
            <person name="Davis R.W."/>
            <person name="Theologis A."/>
            <person name="Ecker J.R."/>
        </authorList>
    </citation>
    <scope>NUCLEOTIDE SEQUENCE [LARGE SCALE MRNA] (ISOFORM 2)</scope>
    <source>
        <strain>cv. Columbia</strain>
    </source>
</reference>
<reference key="4">
    <citation type="journal article" date="2008" name="Plant Cell Physiol.">
        <title>Antagonistic jacalin-related lectins regulate the size of ER body-type beta-glucosidase complexes in Arabidopsis thaliana.</title>
        <authorList>
            <person name="Nagano A.J."/>
            <person name="Fukao Y."/>
            <person name="Fujiwara M."/>
            <person name="Nishimura M."/>
            <person name="Hara-Nishimura I."/>
        </authorList>
    </citation>
    <scope>GENE FAMILY</scope>
    <scope>NOMENCLATURE</scope>
</reference>
<protein>
    <recommendedName>
        <fullName>Jacalin-related lectin 3</fullName>
    </recommendedName>
    <alternativeName>
        <fullName>Mannose-binding lectin superfamily protein</fullName>
    </alternativeName>
</protein>
<name>JAL3_ARATH</name>
<dbReference type="EMBL" id="AC007797">
    <property type="protein sequence ID" value="AAG12566.1"/>
    <property type="molecule type" value="Genomic_DNA"/>
</dbReference>
<dbReference type="EMBL" id="CP002684">
    <property type="protein sequence ID" value="AEE29888.1"/>
    <property type="molecule type" value="Genomic_DNA"/>
</dbReference>
<dbReference type="EMBL" id="CP002684">
    <property type="protein sequence ID" value="AEE29889.1"/>
    <property type="molecule type" value="Genomic_DNA"/>
</dbReference>
<dbReference type="EMBL" id="CP002684">
    <property type="protein sequence ID" value="AEE29890.1"/>
    <property type="molecule type" value="Genomic_DNA"/>
</dbReference>
<dbReference type="EMBL" id="AY062497">
    <property type="protein sequence ID" value="AAL32575.1"/>
    <property type="molecule type" value="mRNA"/>
</dbReference>
<dbReference type="EMBL" id="AY075593">
    <property type="protein sequence ID" value="AAL91614.1"/>
    <property type="molecule type" value="mRNA"/>
</dbReference>
<dbReference type="EMBL" id="BT000110">
    <property type="protein sequence ID" value="AAN15429.1"/>
    <property type="molecule type" value="mRNA"/>
</dbReference>
<dbReference type="PIR" id="B86330">
    <property type="entry name" value="B86330"/>
</dbReference>
<dbReference type="RefSeq" id="NP_001117315.1">
    <molecule id="F4HQX1-3"/>
    <property type="nucleotide sequence ID" value="NM_001123843.1"/>
</dbReference>
<dbReference type="RefSeq" id="NP_001185041.1">
    <molecule id="F4HQX1-1"/>
    <property type="nucleotide sequence ID" value="NM_001198112.1"/>
</dbReference>
<dbReference type="RefSeq" id="NP_849691.1">
    <molecule id="F4HQX1-2"/>
    <property type="nucleotide sequence ID" value="NM_179360.1"/>
</dbReference>
<dbReference type="SMR" id="F4HQX1"/>
<dbReference type="FunCoup" id="F4HQX1">
    <property type="interactions" value="1225"/>
</dbReference>
<dbReference type="STRING" id="3702.F4HQX1"/>
<dbReference type="GlyGen" id="F4HQX1">
    <property type="glycosylation" value="2 sites"/>
</dbReference>
<dbReference type="PaxDb" id="3702-AT1G19715.3"/>
<dbReference type="ProteomicsDB" id="250665">
    <molecule id="F4HQX1-1"/>
</dbReference>
<dbReference type="EnsemblPlants" id="AT1G19715.1">
    <molecule id="F4HQX1-2"/>
    <property type="protein sequence ID" value="AT1G19715.1"/>
    <property type="gene ID" value="AT1G19715"/>
</dbReference>
<dbReference type="EnsemblPlants" id="AT1G19715.2">
    <molecule id="F4HQX1-3"/>
    <property type="protein sequence ID" value="AT1G19715.2"/>
    <property type="gene ID" value="AT1G19715"/>
</dbReference>
<dbReference type="EnsemblPlants" id="AT1G19715.3">
    <molecule id="F4HQX1-1"/>
    <property type="protein sequence ID" value="AT1G19715.3"/>
    <property type="gene ID" value="AT1G19715"/>
</dbReference>
<dbReference type="GeneID" id="838560"/>
<dbReference type="Gramene" id="AT1G19715.1">
    <molecule id="F4HQX1-2"/>
    <property type="protein sequence ID" value="AT1G19715.1"/>
    <property type="gene ID" value="AT1G19715"/>
</dbReference>
<dbReference type="Gramene" id="AT1G19715.2">
    <molecule id="F4HQX1-3"/>
    <property type="protein sequence ID" value="AT1G19715.2"/>
    <property type="gene ID" value="AT1G19715"/>
</dbReference>
<dbReference type="Gramene" id="AT1G19715.3">
    <molecule id="F4HQX1-1"/>
    <property type="protein sequence ID" value="AT1G19715.3"/>
    <property type="gene ID" value="AT1G19715"/>
</dbReference>
<dbReference type="KEGG" id="ath:AT1G19715"/>
<dbReference type="Araport" id="AT1G19715"/>
<dbReference type="TAIR" id="AT1G19715"/>
<dbReference type="eggNOG" id="KOG4197">
    <property type="taxonomic scope" value="Eukaryota"/>
</dbReference>
<dbReference type="InParanoid" id="F4HQX1"/>
<dbReference type="OMA" id="KQIYLTR"/>
<dbReference type="PRO" id="PR:F4HQX1"/>
<dbReference type="Proteomes" id="UP000006548">
    <property type="component" value="Chromosome 1"/>
</dbReference>
<dbReference type="ExpressionAtlas" id="F4HQX1">
    <property type="expression patterns" value="baseline and differential"/>
</dbReference>
<dbReference type="GO" id="GO:0030246">
    <property type="term" value="F:carbohydrate binding"/>
    <property type="evidence" value="ECO:0007669"/>
    <property type="project" value="UniProtKB-KW"/>
</dbReference>
<dbReference type="CDD" id="cd09612">
    <property type="entry name" value="Jacalin"/>
    <property type="match status" value="3"/>
</dbReference>
<dbReference type="FunFam" id="2.100.10.30:FF:000001">
    <property type="entry name" value="Jacalin-related lectin 33"/>
    <property type="match status" value="3"/>
</dbReference>
<dbReference type="Gene3D" id="2.100.10.30">
    <property type="entry name" value="Jacalin-like lectin domain"/>
    <property type="match status" value="3"/>
</dbReference>
<dbReference type="InterPro" id="IPR001229">
    <property type="entry name" value="Jacalin-like_lectin_dom"/>
</dbReference>
<dbReference type="InterPro" id="IPR033734">
    <property type="entry name" value="Jacalin-like_lectin_dom_plant"/>
</dbReference>
<dbReference type="InterPro" id="IPR036404">
    <property type="entry name" value="Jacalin-like_lectin_dom_sf"/>
</dbReference>
<dbReference type="PANTHER" id="PTHR47293">
    <property type="entry name" value="JACALIN-RELATED LECTIN 3"/>
    <property type="match status" value="1"/>
</dbReference>
<dbReference type="PANTHER" id="PTHR47293:SF68">
    <property type="entry name" value="JACALIN-RELATED LECTIN 3"/>
    <property type="match status" value="1"/>
</dbReference>
<dbReference type="Pfam" id="PF01419">
    <property type="entry name" value="Jacalin"/>
    <property type="match status" value="3"/>
</dbReference>
<dbReference type="SMART" id="SM00915">
    <property type="entry name" value="Jacalin"/>
    <property type="match status" value="3"/>
</dbReference>
<dbReference type="SUPFAM" id="SSF51101">
    <property type="entry name" value="Mannose-binding lectins"/>
    <property type="match status" value="3"/>
</dbReference>
<dbReference type="PROSITE" id="PS51752">
    <property type="entry name" value="JACALIN_LECTIN"/>
    <property type="match status" value="3"/>
</dbReference>
<comment type="alternative products">
    <event type="alternative splicing"/>
    <isoform>
        <id>F4HQX1-1</id>
        <name>1</name>
        <sequence type="displayed"/>
    </isoform>
    <isoform>
        <id>F4HQX1-2</id>
        <name>2</name>
        <sequence type="described" ref="VSP_056711"/>
    </isoform>
    <isoform>
        <id>F4HQX1-3</id>
        <name>3</name>
        <sequence type="described" ref="VSP_056710"/>
    </isoform>
</comment>
<comment type="similarity">
    <text evidence="1 3">Belongs to the jacalin lectin family.</text>
</comment>
<sequence length="601" mass="65645">MVLTSSYSVEGKPASLGPWGGQSGHAWDDGMYTTVKQIIIAHGSGIDSIQIEYDKNGSSVWSEKRGGKGGKKFDKVKFDYPHEYLISVNGTYGSFDVWGTICVRSLTFESNRRKYGPFGVDSGTFFALPKSGSKIIGFHGKAGWYLDAIGVHTQPIPKENNPSSKILLHSHQSFSQGDKKHEYSVLQGSVGQNFDIVVTLRKKDPTLPSFESRDSAGAEVTKHKLVTDTEKSQSKIEGGAKTYGPWGGTGGIMFDDGIYTGIRQINLSRNVGIVSMKVCYDFRGQAVWGSKHGGVGGFKHDKIVFDYPSEVLTHVTGTYGPLMYMGPNVIKSLTFRTNRGKHGPYGEEQGPSFTHQMDEGKVVGFLGREGLFLDSIGVHVMECKISSLKPSSPHNAIVPHNNSGTAQIENSPWANKLVLAANGHGEEVDRGVVKEPTPSGPGPWGGDGGQAWDDGVFSGIKQIFVTRGNDAITSIQIEYDRNGQSVWSIKHGGDSNGVATHRIKFEYPDESITCISGYYGPLNNSDRYNVVKSLSFYTSRGRYGPYGEETGTFFTSTTTQGKVLGFHGRSSFHLDAIGVHMQHWLGNNKSYYSRASCFKLF</sequence>
<keyword id="KW-0025">Alternative splicing</keyword>
<keyword id="KW-0430">Lectin</keyword>
<keyword id="KW-1185">Reference proteome</keyword>
<keyword id="KW-0677">Repeat</keyword>
<evidence type="ECO:0000255" key="1">
    <source>
        <dbReference type="PROSITE-ProRule" id="PRU01088"/>
    </source>
</evidence>
<evidence type="ECO:0000303" key="2">
    <source>
    </source>
</evidence>
<evidence type="ECO:0000305" key="3"/>
<proteinExistence type="evidence at transcript level"/>
<organism>
    <name type="scientific">Arabidopsis thaliana</name>
    <name type="common">Mouse-ear cress</name>
    <dbReference type="NCBI Taxonomy" id="3702"/>
    <lineage>
        <taxon>Eukaryota</taxon>
        <taxon>Viridiplantae</taxon>
        <taxon>Streptophyta</taxon>
        <taxon>Embryophyta</taxon>
        <taxon>Tracheophyta</taxon>
        <taxon>Spermatophyta</taxon>
        <taxon>Magnoliopsida</taxon>
        <taxon>eudicotyledons</taxon>
        <taxon>Gunneridae</taxon>
        <taxon>Pentapetalae</taxon>
        <taxon>rosids</taxon>
        <taxon>malvids</taxon>
        <taxon>Brassicales</taxon>
        <taxon>Brassicaceae</taxon>
        <taxon>Camelineae</taxon>
        <taxon>Arabidopsis</taxon>
    </lineage>
</organism>
<gene>
    <name type="primary">JAL3</name>
    <name type="ordered locus">At1g19715</name>
    <name type="ORF">F6F9.23</name>
</gene>